<name>PLSX_BRUA1</name>
<feature type="chain" id="PRO_1000089881" description="Phosphate acyltransferase">
    <location>
        <begin position="1"/>
        <end position="346"/>
    </location>
</feature>
<dbReference type="EC" id="2.3.1.274" evidence="1"/>
<dbReference type="EMBL" id="CP000887">
    <property type="protein sequence ID" value="ACD72270.1"/>
    <property type="molecule type" value="Genomic_DNA"/>
</dbReference>
<dbReference type="RefSeq" id="WP_002963912.1">
    <property type="nucleotide sequence ID" value="NC_010742.1"/>
</dbReference>
<dbReference type="SMR" id="B2S523"/>
<dbReference type="GeneID" id="93016835"/>
<dbReference type="KEGG" id="bmc:BAbS19_I07460"/>
<dbReference type="HOGENOM" id="CLU_039379_1_0_5"/>
<dbReference type="UniPathway" id="UPA00085"/>
<dbReference type="Proteomes" id="UP000002565">
    <property type="component" value="Chromosome 1"/>
</dbReference>
<dbReference type="GO" id="GO:0005737">
    <property type="term" value="C:cytoplasm"/>
    <property type="evidence" value="ECO:0007669"/>
    <property type="project" value="UniProtKB-SubCell"/>
</dbReference>
<dbReference type="GO" id="GO:0043811">
    <property type="term" value="F:phosphate:acyl-[acyl carrier protein] acyltransferase activity"/>
    <property type="evidence" value="ECO:0007669"/>
    <property type="project" value="UniProtKB-UniRule"/>
</dbReference>
<dbReference type="GO" id="GO:0006633">
    <property type="term" value="P:fatty acid biosynthetic process"/>
    <property type="evidence" value="ECO:0007669"/>
    <property type="project" value="UniProtKB-UniRule"/>
</dbReference>
<dbReference type="GO" id="GO:0008654">
    <property type="term" value="P:phospholipid biosynthetic process"/>
    <property type="evidence" value="ECO:0007669"/>
    <property type="project" value="UniProtKB-KW"/>
</dbReference>
<dbReference type="Gene3D" id="3.40.718.10">
    <property type="entry name" value="Isopropylmalate Dehydrogenase"/>
    <property type="match status" value="1"/>
</dbReference>
<dbReference type="HAMAP" id="MF_00019">
    <property type="entry name" value="PlsX"/>
    <property type="match status" value="1"/>
</dbReference>
<dbReference type="InterPro" id="IPR003664">
    <property type="entry name" value="FA_synthesis"/>
</dbReference>
<dbReference type="InterPro" id="IPR012281">
    <property type="entry name" value="Phospholipid_synth_PlsX-like"/>
</dbReference>
<dbReference type="NCBIfam" id="TIGR00182">
    <property type="entry name" value="plsX"/>
    <property type="match status" value="1"/>
</dbReference>
<dbReference type="PANTHER" id="PTHR30100">
    <property type="entry name" value="FATTY ACID/PHOSPHOLIPID SYNTHESIS PROTEIN PLSX"/>
    <property type="match status" value="1"/>
</dbReference>
<dbReference type="PANTHER" id="PTHR30100:SF1">
    <property type="entry name" value="PHOSPHATE ACYLTRANSFERASE"/>
    <property type="match status" value="1"/>
</dbReference>
<dbReference type="Pfam" id="PF02504">
    <property type="entry name" value="FA_synthesis"/>
    <property type="match status" value="1"/>
</dbReference>
<dbReference type="PIRSF" id="PIRSF002465">
    <property type="entry name" value="Phsphlp_syn_PlsX"/>
    <property type="match status" value="1"/>
</dbReference>
<dbReference type="SUPFAM" id="SSF53659">
    <property type="entry name" value="Isocitrate/Isopropylmalate dehydrogenase-like"/>
    <property type="match status" value="1"/>
</dbReference>
<sequence>MIKISIDAMGGDFGPEVVIPGAAKAFERHPDIRFIFFGLPAQVEPVLARYPKLKEASEFRASEVAIGMDDKPSQALRAGRGKSSMWQAIEAVKTGDADACVSAGNTGALMAMSKFCLRMMSDVERPAIAGIWPTLRGESIVLDIGATIGADARQLVDYAVMGAGMARALFEVRKPTVGLLNVGTEEVKGLDEIKEAGQILRDTPLDGLEYSGFVEGNDIGKGTVDVVVTEGFTGNIALKTAEGTARQMAELLRQAMSRTLLAKIGYVFAKGAFDRLREKMDPNKVNGGVFLGLSGIVIKSHGGANAEGFCSAVEVGYDMVRNRLLEKIEADLAHFHHSHSHVSSKA</sequence>
<comment type="function">
    <text evidence="1">Catalyzes the reversible formation of acyl-phosphate (acyl-PO(4)) from acyl-[acyl-carrier-protein] (acyl-ACP). This enzyme utilizes acyl-ACP as fatty acyl donor, but not acyl-CoA.</text>
</comment>
<comment type="catalytic activity">
    <reaction evidence="1">
        <text>a fatty acyl-[ACP] + phosphate = an acyl phosphate + holo-[ACP]</text>
        <dbReference type="Rhea" id="RHEA:42292"/>
        <dbReference type="Rhea" id="RHEA-COMP:9685"/>
        <dbReference type="Rhea" id="RHEA-COMP:14125"/>
        <dbReference type="ChEBI" id="CHEBI:43474"/>
        <dbReference type="ChEBI" id="CHEBI:59918"/>
        <dbReference type="ChEBI" id="CHEBI:64479"/>
        <dbReference type="ChEBI" id="CHEBI:138651"/>
        <dbReference type="EC" id="2.3.1.274"/>
    </reaction>
</comment>
<comment type="pathway">
    <text evidence="1">Lipid metabolism; phospholipid metabolism.</text>
</comment>
<comment type="subunit">
    <text evidence="1">Homodimer. Probably interacts with PlsY.</text>
</comment>
<comment type="subcellular location">
    <subcellularLocation>
        <location evidence="1">Cytoplasm</location>
    </subcellularLocation>
    <text evidence="1">Associated with the membrane possibly through PlsY.</text>
</comment>
<comment type="similarity">
    <text evidence="1">Belongs to the PlsX family.</text>
</comment>
<gene>
    <name evidence="1" type="primary">plsX</name>
    <name type="ordered locus">BAbS19_I07460</name>
</gene>
<evidence type="ECO:0000255" key="1">
    <source>
        <dbReference type="HAMAP-Rule" id="MF_00019"/>
    </source>
</evidence>
<accession>B2S523</accession>
<reference key="1">
    <citation type="journal article" date="2008" name="PLoS ONE">
        <title>Genome sequence of Brucella abortus vaccine strain S19 compared to virulent strains yields candidate virulence genes.</title>
        <authorList>
            <person name="Crasta O.R."/>
            <person name="Folkerts O."/>
            <person name="Fei Z."/>
            <person name="Mane S.P."/>
            <person name="Evans C."/>
            <person name="Martino-Catt S."/>
            <person name="Bricker B."/>
            <person name="Yu G."/>
            <person name="Du L."/>
            <person name="Sobral B.W."/>
        </authorList>
    </citation>
    <scope>NUCLEOTIDE SEQUENCE [LARGE SCALE GENOMIC DNA]</scope>
    <source>
        <strain>S19</strain>
    </source>
</reference>
<proteinExistence type="inferred from homology"/>
<protein>
    <recommendedName>
        <fullName evidence="1">Phosphate acyltransferase</fullName>
        <ecNumber evidence="1">2.3.1.274</ecNumber>
    </recommendedName>
    <alternativeName>
        <fullName evidence="1">Acyl-ACP phosphotransacylase</fullName>
    </alternativeName>
    <alternativeName>
        <fullName evidence="1">Acyl-[acyl-carrier-protein]--phosphate acyltransferase</fullName>
    </alternativeName>
    <alternativeName>
        <fullName evidence="1">Phosphate-acyl-ACP acyltransferase</fullName>
    </alternativeName>
</protein>
<organism>
    <name type="scientific">Brucella abortus (strain S19)</name>
    <dbReference type="NCBI Taxonomy" id="430066"/>
    <lineage>
        <taxon>Bacteria</taxon>
        <taxon>Pseudomonadati</taxon>
        <taxon>Pseudomonadota</taxon>
        <taxon>Alphaproteobacteria</taxon>
        <taxon>Hyphomicrobiales</taxon>
        <taxon>Brucellaceae</taxon>
        <taxon>Brucella/Ochrobactrum group</taxon>
        <taxon>Brucella</taxon>
    </lineage>
</organism>
<keyword id="KW-0963">Cytoplasm</keyword>
<keyword id="KW-0444">Lipid biosynthesis</keyword>
<keyword id="KW-0443">Lipid metabolism</keyword>
<keyword id="KW-0594">Phospholipid biosynthesis</keyword>
<keyword id="KW-1208">Phospholipid metabolism</keyword>
<keyword id="KW-0808">Transferase</keyword>